<reference key="1">
    <citation type="journal article" date="2004" name="Proc. Natl. Acad. Sci. U.S.A.">
        <title>Genomic plasticity of the causative agent of melioidosis, Burkholderia pseudomallei.</title>
        <authorList>
            <person name="Holden M.T.G."/>
            <person name="Titball R.W."/>
            <person name="Peacock S.J."/>
            <person name="Cerdeno-Tarraga A.-M."/>
            <person name="Atkins T."/>
            <person name="Crossman L.C."/>
            <person name="Pitt T."/>
            <person name="Churcher C."/>
            <person name="Mungall K.L."/>
            <person name="Bentley S.D."/>
            <person name="Sebaihia M."/>
            <person name="Thomson N.R."/>
            <person name="Bason N."/>
            <person name="Beacham I.R."/>
            <person name="Brooks K."/>
            <person name="Brown K.A."/>
            <person name="Brown N.F."/>
            <person name="Challis G.L."/>
            <person name="Cherevach I."/>
            <person name="Chillingworth T."/>
            <person name="Cronin A."/>
            <person name="Crossett B."/>
            <person name="Davis P."/>
            <person name="DeShazer D."/>
            <person name="Feltwell T."/>
            <person name="Fraser A."/>
            <person name="Hance Z."/>
            <person name="Hauser H."/>
            <person name="Holroyd S."/>
            <person name="Jagels K."/>
            <person name="Keith K.E."/>
            <person name="Maddison M."/>
            <person name="Moule S."/>
            <person name="Price C."/>
            <person name="Quail M.A."/>
            <person name="Rabbinowitsch E."/>
            <person name="Rutherford K."/>
            <person name="Sanders M."/>
            <person name="Simmonds M."/>
            <person name="Songsivilai S."/>
            <person name="Stevens K."/>
            <person name="Tumapa S."/>
            <person name="Vesaratchavest M."/>
            <person name="Whitehead S."/>
            <person name="Yeats C."/>
            <person name="Barrell B.G."/>
            <person name="Oyston P.C.F."/>
            <person name="Parkhill J."/>
        </authorList>
    </citation>
    <scope>NUCLEOTIDE SEQUENCE [LARGE SCALE GENOMIC DNA]</scope>
    <source>
        <strain>K96243</strain>
    </source>
</reference>
<dbReference type="EMBL" id="BX571965">
    <property type="protein sequence ID" value="CAH34059.1"/>
    <property type="molecule type" value="Genomic_DNA"/>
</dbReference>
<dbReference type="RefSeq" id="WP_004198824.1">
    <property type="nucleotide sequence ID" value="NZ_CP009538.1"/>
</dbReference>
<dbReference type="RefSeq" id="YP_106701.1">
    <property type="nucleotide sequence ID" value="NC_006350.1"/>
</dbReference>
<dbReference type="SMR" id="Q63YW4"/>
<dbReference type="STRING" id="272560.BPSL0075a"/>
<dbReference type="GeneID" id="98107775"/>
<dbReference type="KEGG" id="bps:BPSL0075a"/>
<dbReference type="PATRIC" id="fig|272560.51.peg.1659"/>
<dbReference type="eggNOG" id="COG0230">
    <property type="taxonomic scope" value="Bacteria"/>
</dbReference>
<dbReference type="PRO" id="PR:Q63YW4"/>
<dbReference type="Proteomes" id="UP000000605">
    <property type="component" value="Chromosome 1"/>
</dbReference>
<dbReference type="GO" id="GO:1990904">
    <property type="term" value="C:ribonucleoprotein complex"/>
    <property type="evidence" value="ECO:0007669"/>
    <property type="project" value="UniProtKB-KW"/>
</dbReference>
<dbReference type="GO" id="GO:0005840">
    <property type="term" value="C:ribosome"/>
    <property type="evidence" value="ECO:0007669"/>
    <property type="project" value="UniProtKB-KW"/>
</dbReference>
<dbReference type="GO" id="GO:0003735">
    <property type="term" value="F:structural constituent of ribosome"/>
    <property type="evidence" value="ECO:0007669"/>
    <property type="project" value="InterPro"/>
</dbReference>
<dbReference type="GO" id="GO:0006412">
    <property type="term" value="P:translation"/>
    <property type="evidence" value="ECO:0007669"/>
    <property type="project" value="UniProtKB-UniRule"/>
</dbReference>
<dbReference type="FunFam" id="1.10.287.3980:FF:000001">
    <property type="entry name" value="Mitochondrial ribosomal protein L34"/>
    <property type="match status" value="1"/>
</dbReference>
<dbReference type="Gene3D" id="1.10.287.3980">
    <property type="match status" value="1"/>
</dbReference>
<dbReference type="HAMAP" id="MF_00391">
    <property type="entry name" value="Ribosomal_bL34"/>
    <property type="match status" value="1"/>
</dbReference>
<dbReference type="InterPro" id="IPR000271">
    <property type="entry name" value="Ribosomal_bL34"/>
</dbReference>
<dbReference type="InterPro" id="IPR020939">
    <property type="entry name" value="Ribosomal_bL34_CS"/>
</dbReference>
<dbReference type="NCBIfam" id="TIGR01030">
    <property type="entry name" value="rpmH_bact"/>
    <property type="match status" value="1"/>
</dbReference>
<dbReference type="PANTHER" id="PTHR14503:SF4">
    <property type="entry name" value="LARGE RIBOSOMAL SUBUNIT PROTEIN BL34M"/>
    <property type="match status" value="1"/>
</dbReference>
<dbReference type="PANTHER" id="PTHR14503">
    <property type="entry name" value="MITOCHONDRIAL RIBOSOMAL PROTEIN 34 FAMILY MEMBER"/>
    <property type="match status" value="1"/>
</dbReference>
<dbReference type="Pfam" id="PF00468">
    <property type="entry name" value="Ribosomal_L34"/>
    <property type="match status" value="1"/>
</dbReference>
<dbReference type="PROSITE" id="PS00784">
    <property type="entry name" value="RIBOSOMAL_L34"/>
    <property type="match status" value="1"/>
</dbReference>
<name>RL34_BURPS</name>
<sequence length="44" mass="5195">MKRTYQPSVTRRKRTHGFRVRMKTAGGRKVINARRAKGRKRLAI</sequence>
<feature type="chain" id="PRO_0000187359" description="Large ribosomal subunit protein bL34">
    <location>
        <begin position="1"/>
        <end position="44"/>
    </location>
</feature>
<proteinExistence type="inferred from homology"/>
<keyword id="KW-1185">Reference proteome</keyword>
<keyword id="KW-0687">Ribonucleoprotein</keyword>
<keyword id="KW-0689">Ribosomal protein</keyword>
<organism>
    <name type="scientific">Burkholderia pseudomallei (strain K96243)</name>
    <dbReference type="NCBI Taxonomy" id="272560"/>
    <lineage>
        <taxon>Bacteria</taxon>
        <taxon>Pseudomonadati</taxon>
        <taxon>Pseudomonadota</taxon>
        <taxon>Betaproteobacteria</taxon>
        <taxon>Burkholderiales</taxon>
        <taxon>Burkholderiaceae</taxon>
        <taxon>Burkholderia</taxon>
        <taxon>pseudomallei group</taxon>
    </lineage>
</organism>
<gene>
    <name evidence="1" type="primary">rpmH</name>
    <name type="ordered locus">BPSL0075.1</name>
</gene>
<comment type="similarity">
    <text evidence="1">Belongs to the bacterial ribosomal protein bL34 family.</text>
</comment>
<protein>
    <recommendedName>
        <fullName evidence="1">Large ribosomal subunit protein bL34</fullName>
    </recommendedName>
    <alternativeName>
        <fullName evidence="2">50S ribosomal protein L34</fullName>
    </alternativeName>
</protein>
<accession>Q63YW4</accession>
<evidence type="ECO:0000255" key="1">
    <source>
        <dbReference type="HAMAP-Rule" id="MF_00391"/>
    </source>
</evidence>
<evidence type="ECO:0000305" key="2"/>